<name>C2D2A_MOUSE</name>
<protein>
    <recommendedName>
        <fullName>Coiled-coil and C2 domain-containing protein 2A</fullName>
    </recommendedName>
</protein>
<proteinExistence type="evidence at protein level"/>
<evidence type="ECO:0000255" key="1"/>
<evidence type="ECO:0000255" key="2">
    <source>
        <dbReference type="PROSITE-ProRule" id="PRU00041"/>
    </source>
</evidence>
<evidence type="ECO:0000256" key="3">
    <source>
        <dbReference type="SAM" id="MobiDB-lite"/>
    </source>
</evidence>
<evidence type="ECO:0000269" key="4">
    <source>
    </source>
</evidence>
<evidence type="ECO:0000269" key="5">
    <source>
    </source>
</evidence>
<evidence type="ECO:0000303" key="6">
    <source>
    </source>
</evidence>
<evidence type="ECO:0000305" key="7"/>
<keyword id="KW-0025">Alternative splicing</keyword>
<keyword id="KW-0966">Cell projection</keyword>
<keyword id="KW-0969">Cilium</keyword>
<keyword id="KW-0970">Cilium biogenesis/degradation</keyword>
<keyword id="KW-0175">Coiled coil</keyword>
<keyword id="KW-0963">Cytoplasm</keyword>
<keyword id="KW-0206">Cytoskeleton</keyword>
<keyword id="KW-1185">Reference proteome</keyword>
<gene>
    <name type="primary">Cc2d2a</name>
</gene>
<dbReference type="EMBL" id="BC032290">
    <property type="protein sequence ID" value="AAH32290.1"/>
    <property type="molecule type" value="mRNA"/>
</dbReference>
<dbReference type="EMBL" id="AK077658">
    <property type="protein sequence ID" value="BAC36933.1"/>
    <property type="molecule type" value="mRNA"/>
</dbReference>
<dbReference type="CCDS" id="CCDS39080.1">
    <molecule id="Q8CFW7-1"/>
</dbReference>
<dbReference type="RefSeq" id="NP_758478.1">
    <molecule id="Q8CFW7-1"/>
    <property type="nucleotide sequence ID" value="NM_172274.2"/>
</dbReference>
<dbReference type="SMR" id="Q8CFW7"/>
<dbReference type="BioGRID" id="231096">
    <property type="interactions" value="2"/>
</dbReference>
<dbReference type="CORUM" id="Q8CFW7"/>
<dbReference type="FunCoup" id="Q8CFW7">
    <property type="interactions" value="198"/>
</dbReference>
<dbReference type="IntAct" id="Q8CFW7">
    <property type="interactions" value="7"/>
</dbReference>
<dbReference type="STRING" id="10090.ENSMUSP00000048320"/>
<dbReference type="GlyGen" id="Q8CFW7">
    <property type="glycosylation" value="2 sites"/>
</dbReference>
<dbReference type="iPTMnet" id="Q8CFW7"/>
<dbReference type="PhosphoSitePlus" id="Q8CFW7"/>
<dbReference type="PaxDb" id="10090-ENSMUSP00000048320"/>
<dbReference type="ProteomicsDB" id="265406">
    <molecule id="Q8CFW7-1"/>
</dbReference>
<dbReference type="ProteomicsDB" id="265407">
    <molecule id="Q8CFW7-2"/>
</dbReference>
<dbReference type="Antibodypedia" id="50288">
    <property type="antibodies" value="29 antibodies from 15 providers"/>
</dbReference>
<dbReference type="DNASU" id="231214"/>
<dbReference type="Ensembl" id="ENSMUST00000048150.15">
    <molecule id="Q8CFW7-1"/>
    <property type="protein sequence ID" value="ENSMUSP00000048320.9"/>
    <property type="gene ID" value="ENSMUSG00000039765.16"/>
</dbReference>
<dbReference type="GeneID" id="231214"/>
<dbReference type="KEGG" id="mmu:231214"/>
<dbReference type="UCSC" id="uc008xhp.2">
    <molecule id="Q8CFW7-1"/>
    <property type="organism name" value="mouse"/>
</dbReference>
<dbReference type="AGR" id="MGI:1924487"/>
<dbReference type="CTD" id="57545"/>
<dbReference type="MGI" id="MGI:1924487">
    <property type="gene designation" value="Cc2d2a"/>
</dbReference>
<dbReference type="VEuPathDB" id="HostDB:ENSMUSG00000039765"/>
<dbReference type="eggNOG" id="KOG3639">
    <property type="taxonomic scope" value="Eukaryota"/>
</dbReference>
<dbReference type="GeneTree" id="ENSGT00940000155482"/>
<dbReference type="HOGENOM" id="CLU_001707_0_0_1"/>
<dbReference type="InParanoid" id="Q8CFW7"/>
<dbReference type="OMA" id="NADNIWF"/>
<dbReference type="OrthoDB" id="2162143at2759"/>
<dbReference type="PhylomeDB" id="Q8CFW7"/>
<dbReference type="TreeFam" id="TF324786"/>
<dbReference type="Reactome" id="R-MMU-5620912">
    <property type="pathway name" value="Anchoring of the basal body to the plasma membrane"/>
</dbReference>
<dbReference type="BioGRID-ORCS" id="231214">
    <property type="hits" value="3 hits in 77 CRISPR screens"/>
</dbReference>
<dbReference type="ChiTaRS" id="Cc2d2a">
    <property type="organism name" value="mouse"/>
</dbReference>
<dbReference type="PRO" id="PR:Q8CFW7"/>
<dbReference type="Proteomes" id="UP000000589">
    <property type="component" value="Chromosome 5"/>
</dbReference>
<dbReference type="RNAct" id="Q8CFW7">
    <property type="molecule type" value="protein"/>
</dbReference>
<dbReference type="Bgee" id="ENSMUSG00000039765">
    <property type="expression patterns" value="Expressed in pigmented layer of retina and 218 other cell types or tissues"/>
</dbReference>
<dbReference type="ExpressionAtlas" id="Q8CFW7">
    <property type="expression patterns" value="baseline and differential"/>
</dbReference>
<dbReference type="GO" id="GO:0035869">
    <property type="term" value="C:ciliary transition zone"/>
    <property type="evidence" value="ECO:0000314"/>
    <property type="project" value="UniProtKB"/>
</dbReference>
<dbReference type="GO" id="GO:0005737">
    <property type="term" value="C:cytoplasm"/>
    <property type="evidence" value="ECO:0007669"/>
    <property type="project" value="UniProtKB-SubCell"/>
</dbReference>
<dbReference type="GO" id="GO:0005856">
    <property type="term" value="C:cytoskeleton"/>
    <property type="evidence" value="ECO:0007669"/>
    <property type="project" value="UniProtKB-KW"/>
</dbReference>
<dbReference type="GO" id="GO:0036038">
    <property type="term" value="C:MKS complex"/>
    <property type="evidence" value="ECO:0000314"/>
    <property type="project" value="UniProtKB"/>
</dbReference>
<dbReference type="GO" id="GO:0035082">
    <property type="term" value="P:axoneme assembly"/>
    <property type="evidence" value="ECO:0000315"/>
    <property type="project" value="MGI"/>
</dbReference>
<dbReference type="GO" id="GO:0043010">
    <property type="term" value="P:camera-type eye development"/>
    <property type="evidence" value="ECO:0000315"/>
    <property type="project" value="MGI"/>
</dbReference>
<dbReference type="GO" id="GO:0060271">
    <property type="term" value="P:cilium assembly"/>
    <property type="evidence" value="ECO:0000315"/>
    <property type="project" value="UniProtKB"/>
</dbReference>
<dbReference type="GO" id="GO:0007368">
    <property type="term" value="P:determination of left/right symmetry"/>
    <property type="evidence" value="ECO:0000315"/>
    <property type="project" value="MGI"/>
</dbReference>
<dbReference type="GO" id="GO:1990403">
    <property type="term" value="P:embryonic brain development"/>
    <property type="evidence" value="ECO:0000315"/>
    <property type="project" value="MGI"/>
</dbReference>
<dbReference type="GO" id="GO:0007507">
    <property type="term" value="P:heart development"/>
    <property type="evidence" value="ECO:0000315"/>
    <property type="project" value="MGI"/>
</dbReference>
<dbReference type="GO" id="GO:0001822">
    <property type="term" value="P:kidney development"/>
    <property type="evidence" value="ECO:0000315"/>
    <property type="project" value="MGI"/>
</dbReference>
<dbReference type="GO" id="GO:0044458">
    <property type="term" value="P:motile cilium assembly"/>
    <property type="evidence" value="ECO:0000315"/>
    <property type="project" value="MGI"/>
</dbReference>
<dbReference type="GO" id="GO:0001843">
    <property type="term" value="P:neural tube closure"/>
    <property type="evidence" value="ECO:0000315"/>
    <property type="project" value="MGI"/>
</dbReference>
<dbReference type="GO" id="GO:1905515">
    <property type="term" value="P:non-motile cilium assembly"/>
    <property type="evidence" value="ECO:0000315"/>
    <property type="project" value="MGI"/>
</dbReference>
<dbReference type="GO" id="GO:1904491">
    <property type="term" value="P:protein localization to ciliary transition zone"/>
    <property type="evidence" value="ECO:0000315"/>
    <property type="project" value="WormBase"/>
</dbReference>
<dbReference type="GO" id="GO:0007224">
    <property type="term" value="P:smoothened signaling pathway"/>
    <property type="evidence" value="ECO:0000315"/>
    <property type="project" value="UniProtKB"/>
</dbReference>
<dbReference type="Gene3D" id="2.60.40.150">
    <property type="entry name" value="C2 domain"/>
    <property type="match status" value="1"/>
</dbReference>
<dbReference type="InterPro" id="IPR000008">
    <property type="entry name" value="C2_dom"/>
</dbReference>
<dbReference type="InterPro" id="IPR035892">
    <property type="entry name" value="C2_domain_sf"/>
</dbReference>
<dbReference type="InterPro" id="IPR028928">
    <property type="entry name" value="CC2D2AN-C2"/>
</dbReference>
<dbReference type="InterPro" id="IPR056288">
    <property type="entry name" value="CEP76_C"/>
</dbReference>
<dbReference type="InterPro" id="IPR056290">
    <property type="entry name" value="CEPT76/DRC7_peptidase-like_dom"/>
</dbReference>
<dbReference type="InterPro" id="IPR041510">
    <property type="entry name" value="DUF5523"/>
</dbReference>
<dbReference type="InterPro" id="IPR052434">
    <property type="entry name" value="Tectonic-like_complex_comp"/>
</dbReference>
<dbReference type="PANTHER" id="PTHR20837">
    <property type="entry name" value="CENTROSOMAL PROTEIN-RELATED"/>
    <property type="match status" value="1"/>
</dbReference>
<dbReference type="PANTHER" id="PTHR20837:SF7">
    <property type="entry name" value="COILED-COIL AND C2 DOMAIN-CONTAINING PROTEIN 2A"/>
    <property type="match status" value="1"/>
</dbReference>
<dbReference type="Pfam" id="PF15625">
    <property type="entry name" value="CC2D2AN-C2"/>
    <property type="match status" value="1"/>
</dbReference>
<dbReference type="Pfam" id="PF24652">
    <property type="entry name" value="CEP76_C"/>
    <property type="match status" value="1"/>
</dbReference>
<dbReference type="Pfam" id="PF24656">
    <property type="entry name" value="CEPT76_peptidase"/>
    <property type="match status" value="1"/>
</dbReference>
<dbReference type="Pfam" id="PF17661">
    <property type="entry name" value="DUF5523"/>
    <property type="match status" value="1"/>
</dbReference>
<dbReference type="SMART" id="SM00239">
    <property type="entry name" value="C2"/>
    <property type="match status" value="1"/>
</dbReference>
<dbReference type="SUPFAM" id="SSF49562">
    <property type="entry name" value="C2 domain (Calcium/lipid-binding domain, CaLB)"/>
    <property type="match status" value="1"/>
</dbReference>
<dbReference type="PROSITE" id="PS50004">
    <property type="entry name" value="C2"/>
    <property type="match status" value="1"/>
</dbReference>
<feature type="chain" id="PRO_0000317251" description="Coiled-coil and C2 domain-containing protein 2A">
    <location>
        <begin position="1"/>
        <end position="1633"/>
    </location>
</feature>
<feature type="domain" description="C2" evidence="2">
    <location>
        <begin position="1031"/>
        <end position="1209"/>
    </location>
</feature>
<feature type="region of interest" description="Disordered" evidence="3">
    <location>
        <begin position="1"/>
        <end position="188"/>
    </location>
</feature>
<feature type="region of interest" description="Disordered" evidence="3">
    <location>
        <begin position="200"/>
        <end position="245"/>
    </location>
</feature>
<feature type="region of interest" description="Disordered" evidence="3">
    <location>
        <begin position="590"/>
        <end position="673"/>
    </location>
</feature>
<feature type="region of interest" description="Disordered" evidence="3">
    <location>
        <begin position="1068"/>
        <end position="1094"/>
    </location>
</feature>
<feature type="coiled-coil region" evidence="1">
    <location>
        <begin position="440"/>
        <end position="501"/>
    </location>
</feature>
<feature type="coiled-coil region" evidence="1">
    <location>
        <begin position="554"/>
        <end position="611"/>
    </location>
</feature>
<feature type="compositionally biased region" description="Basic and acidic residues" evidence="3">
    <location>
        <begin position="1"/>
        <end position="12"/>
    </location>
</feature>
<feature type="compositionally biased region" description="Basic residues" evidence="3">
    <location>
        <begin position="26"/>
        <end position="42"/>
    </location>
</feature>
<feature type="compositionally biased region" description="Basic and acidic residues" evidence="3">
    <location>
        <begin position="99"/>
        <end position="115"/>
    </location>
</feature>
<feature type="compositionally biased region" description="Basic and acidic residues" evidence="3">
    <location>
        <begin position="154"/>
        <end position="174"/>
    </location>
</feature>
<feature type="compositionally biased region" description="Basic and acidic residues" evidence="3">
    <location>
        <begin position="209"/>
        <end position="223"/>
    </location>
</feature>
<feature type="compositionally biased region" description="Basic and acidic residues" evidence="3">
    <location>
        <begin position="234"/>
        <end position="245"/>
    </location>
</feature>
<feature type="compositionally biased region" description="Acidic residues" evidence="3">
    <location>
        <begin position="602"/>
        <end position="615"/>
    </location>
</feature>
<feature type="compositionally biased region" description="Polar residues" evidence="3">
    <location>
        <begin position="1068"/>
        <end position="1092"/>
    </location>
</feature>
<feature type="splice variant" id="VSP_030925" description="In isoform 2." evidence="6">
    <location>
        <begin position="1"/>
        <end position="49"/>
    </location>
</feature>
<feature type="sequence conflict" description="In Ref. 2; BAC36933." evidence="7" ref="2">
    <original>G</original>
    <variation>E</variation>
    <location>
        <position position="345"/>
    </location>
</feature>
<sequence>MNTNDEKMKIISEDFTGDGVDTEAGRRKKNSKVRRQQRKKKPPASPPEEMVSDKFQDGGQQEVVEEEPETNLLSLTARRGPRSLPPIPSASRTGFAEFSMRERMREKLQAARSKAESALLRDVPTPRPRRLRSPSREKETETEFGTEPSTEVQDTQKEDDTKSYSRIKFRDSVRKIKSKPQLPPGFPSAEEAYNFFTFNFDPEPEESEEKSPVKGGERAHHEDQEGEEGTQAQERAKKTEEEELLNGKDAEDFLLGLDPTAHDFVAVRAAEYKSARIQLQKEKEILFTPSRLTVPTYKKLPENIQPRFLEDEGLYIGARPEVARTNENIMENRLLIQEPGSKWFGDDGRILALPSPIKPFPSRPSLTTREQSPKAGLETLYKKAEKYVHSRQHMIGSGDPPGNFQLDIDISGLIFTHHPCFSREHVLASKLAQLYDQYLARQQRNKTKFLTDKLQALRKAVQTSLNPEKPHQSLDTTQKTINEYKSEIRQTRKLRDAEQEKDRTLLKTIIKVWKEMKSLREFQRFTNTPLKLVLRKEKVDPKLDEDAYEAEIQAEIHELLEEHMEEYATKMEEYRTSHQQWKAWRKAQRAKKKKKKQTTEEHLEEEEAEESFPEEEVTKPIPPEPTDPAVIEQQVRERAAHSRRRPGEPTLIPELSLAGNVTPNDQCPRVEVSRREDVRRRSVYLKVVFNSKEVSRTVSRPLGADFRVHFGQIFNLQIFNWPESLMLQVYETIGHSGTTLLAEVFLPIPETTLVTGRAPIEEVEFSSNQHVTLDHEGVGSGVPFSFEADGSNQLTLMTSGKVSHSVAWAVGENGIPLIPPLSQQNIGFRSALRRADAISSIGTSGLTDMKKLAKWAAESKLDPNDPNHAPLMQLISVATSGESYVPDFFRLEQLQQEFNFVSEEELNRSKRFRLLHLRSQEVPEFRNYKQIPAYDREIMEKVFQDYEKRLRDRNVIETKDHLDMHRATVAKYLQQVREAVVNRFLTAKHHFLLTDLVVEEEVPNISSEGSGILGLSLFKLAEQKRPLRPRRKGRKKVTAQNLSDGDIKLLVNIIRAYDIPVRKPVVSKFQQPSRSSRTFSEKQTASPSTHSPLHNADYPLGQVLVRPFVEVSFQRTICHTTTAEGPNPSWNEELELPFRAPNGDYSTASLQSVKDDVYINIFDEVLYDILEDDRERGSGIHTRIERHWLGCVKIPFSTIYFQARIDGTFKIDIPPVLLGYSKERNIIMERAFDSARSLSEGSYITLFITIEPQLVPGEPMREKMSDMLKKFDTQEDEKLLQATEKFQAECALKFPQRQCLTTVTDMTGKTVFITRYLKPLNPPQELLHVYPNNPQATAELVARYVSLIPFLPDSVSFAGVCDLWSTSDQFLDLLAGDEEEHAVLLCNYFLFLGKKAWLVMGSAIPEGPTAYVLTWEKNYYLIWNPCSGHCYGQFDAFCPLKSVGCLIGPDNIWFNIQHHDSPLRINFDVTKPKLWKSFFSRSLPYPGLSSVQPEELIYQHTDKAVAAELQDRIEKILKEKIMDWRPRHLTRWNRYCTSTLRHFLPLLERSQGEDIEDDHRAELLKQLGDYRFSGFPLHMPYSEVKPLVEAVYSTGVHNIDLPNVEFALAVYIHPYPKNVLSVWIYVASLVRNR</sequence>
<comment type="function">
    <text evidence="4 5">Component of the tectonic-like complex, a complex localized at the transition zone of primary cilia and acting as a barrier that prevents diffusion of transmembrane proteins between the cilia and plasma membranes. Required for ciliogenesis and sonic hedgehog/SHH signaling.</text>
</comment>
<comment type="subunit">
    <text evidence="4 5">Part of the tectonic-like complex (also named B9 complex).</text>
</comment>
<comment type="subcellular location">
    <subcellularLocation>
        <location evidence="4">Cytoplasm</location>
    </subcellularLocation>
    <subcellularLocation>
        <location evidence="4">Cytoplasm</location>
        <location evidence="4">Cytoskeleton</location>
        <location evidence="4">Cilium basal body</location>
    </subcellularLocation>
    <text>Localizes at the transition zone, a region between the basal body and the ciliary axoneme.</text>
</comment>
<comment type="alternative products">
    <event type="alternative splicing"/>
    <isoform>
        <id>Q8CFW7-1</id>
        <name>1</name>
        <sequence type="displayed"/>
    </isoform>
    <isoform>
        <id>Q8CFW7-2</id>
        <name>2</name>
        <sequence type="described" ref="VSP_030925"/>
    </isoform>
</comment>
<comment type="disruption phenotype">
    <text evidence="4">Embryos show randomized left-right axes, holoprosencephaly, microphthalmia and a variably expressive curved body axis. Cc2d2a null embryos also have cilia defects, which are exemplified by the absence of Arl13b staining in neural tube and surrounding mesenchyme.</text>
</comment>
<accession>Q8CFW7</accession>
<accession>Q8BP57</accession>
<organism>
    <name type="scientific">Mus musculus</name>
    <name type="common">Mouse</name>
    <dbReference type="NCBI Taxonomy" id="10090"/>
    <lineage>
        <taxon>Eukaryota</taxon>
        <taxon>Metazoa</taxon>
        <taxon>Chordata</taxon>
        <taxon>Craniata</taxon>
        <taxon>Vertebrata</taxon>
        <taxon>Euteleostomi</taxon>
        <taxon>Mammalia</taxon>
        <taxon>Eutheria</taxon>
        <taxon>Euarchontoglires</taxon>
        <taxon>Glires</taxon>
        <taxon>Rodentia</taxon>
        <taxon>Myomorpha</taxon>
        <taxon>Muroidea</taxon>
        <taxon>Muridae</taxon>
        <taxon>Murinae</taxon>
        <taxon>Mus</taxon>
        <taxon>Mus</taxon>
    </lineage>
</organism>
<reference key="1">
    <citation type="journal article" date="2004" name="Genome Res.">
        <title>The status, quality, and expansion of the NIH full-length cDNA project: the Mammalian Gene Collection (MGC).</title>
        <authorList>
            <consortium name="The MGC Project Team"/>
        </authorList>
    </citation>
    <scope>NUCLEOTIDE SEQUENCE [LARGE SCALE MRNA] (ISOFORM 1)</scope>
    <source>
        <tissue>Eye</tissue>
    </source>
</reference>
<reference key="2">
    <citation type="journal article" date="2005" name="Science">
        <title>The transcriptional landscape of the mammalian genome.</title>
        <authorList>
            <person name="Carninci P."/>
            <person name="Kasukawa T."/>
            <person name="Katayama S."/>
            <person name="Gough J."/>
            <person name="Frith M.C."/>
            <person name="Maeda N."/>
            <person name="Oyama R."/>
            <person name="Ravasi T."/>
            <person name="Lenhard B."/>
            <person name="Wells C."/>
            <person name="Kodzius R."/>
            <person name="Shimokawa K."/>
            <person name="Bajic V.B."/>
            <person name="Brenner S.E."/>
            <person name="Batalov S."/>
            <person name="Forrest A.R."/>
            <person name="Zavolan M."/>
            <person name="Davis M.J."/>
            <person name="Wilming L.G."/>
            <person name="Aidinis V."/>
            <person name="Allen J.E."/>
            <person name="Ambesi-Impiombato A."/>
            <person name="Apweiler R."/>
            <person name="Aturaliya R.N."/>
            <person name="Bailey T.L."/>
            <person name="Bansal M."/>
            <person name="Baxter L."/>
            <person name="Beisel K.W."/>
            <person name="Bersano T."/>
            <person name="Bono H."/>
            <person name="Chalk A.M."/>
            <person name="Chiu K.P."/>
            <person name="Choudhary V."/>
            <person name="Christoffels A."/>
            <person name="Clutterbuck D.R."/>
            <person name="Crowe M.L."/>
            <person name="Dalla E."/>
            <person name="Dalrymple B.P."/>
            <person name="de Bono B."/>
            <person name="Della Gatta G."/>
            <person name="di Bernardo D."/>
            <person name="Down T."/>
            <person name="Engstrom P."/>
            <person name="Fagiolini M."/>
            <person name="Faulkner G."/>
            <person name="Fletcher C.F."/>
            <person name="Fukushima T."/>
            <person name="Furuno M."/>
            <person name="Futaki S."/>
            <person name="Gariboldi M."/>
            <person name="Georgii-Hemming P."/>
            <person name="Gingeras T.R."/>
            <person name="Gojobori T."/>
            <person name="Green R.E."/>
            <person name="Gustincich S."/>
            <person name="Harbers M."/>
            <person name="Hayashi Y."/>
            <person name="Hensch T.K."/>
            <person name="Hirokawa N."/>
            <person name="Hill D."/>
            <person name="Huminiecki L."/>
            <person name="Iacono M."/>
            <person name="Ikeo K."/>
            <person name="Iwama A."/>
            <person name="Ishikawa T."/>
            <person name="Jakt M."/>
            <person name="Kanapin A."/>
            <person name="Katoh M."/>
            <person name="Kawasawa Y."/>
            <person name="Kelso J."/>
            <person name="Kitamura H."/>
            <person name="Kitano H."/>
            <person name="Kollias G."/>
            <person name="Krishnan S.P."/>
            <person name="Kruger A."/>
            <person name="Kummerfeld S.K."/>
            <person name="Kurochkin I.V."/>
            <person name="Lareau L.F."/>
            <person name="Lazarevic D."/>
            <person name="Lipovich L."/>
            <person name="Liu J."/>
            <person name="Liuni S."/>
            <person name="McWilliam S."/>
            <person name="Madan Babu M."/>
            <person name="Madera M."/>
            <person name="Marchionni L."/>
            <person name="Matsuda H."/>
            <person name="Matsuzawa S."/>
            <person name="Miki H."/>
            <person name="Mignone F."/>
            <person name="Miyake S."/>
            <person name="Morris K."/>
            <person name="Mottagui-Tabar S."/>
            <person name="Mulder N."/>
            <person name="Nakano N."/>
            <person name="Nakauchi H."/>
            <person name="Ng P."/>
            <person name="Nilsson R."/>
            <person name="Nishiguchi S."/>
            <person name="Nishikawa S."/>
            <person name="Nori F."/>
            <person name="Ohara O."/>
            <person name="Okazaki Y."/>
            <person name="Orlando V."/>
            <person name="Pang K.C."/>
            <person name="Pavan W.J."/>
            <person name="Pavesi G."/>
            <person name="Pesole G."/>
            <person name="Petrovsky N."/>
            <person name="Piazza S."/>
            <person name="Reed J."/>
            <person name="Reid J.F."/>
            <person name="Ring B.Z."/>
            <person name="Ringwald M."/>
            <person name="Rost B."/>
            <person name="Ruan Y."/>
            <person name="Salzberg S.L."/>
            <person name="Sandelin A."/>
            <person name="Schneider C."/>
            <person name="Schoenbach C."/>
            <person name="Sekiguchi K."/>
            <person name="Semple C.A."/>
            <person name="Seno S."/>
            <person name="Sessa L."/>
            <person name="Sheng Y."/>
            <person name="Shibata Y."/>
            <person name="Shimada H."/>
            <person name="Shimada K."/>
            <person name="Silva D."/>
            <person name="Sinclair B."/>
            <person name="Sperling S."/>
            <person name="Stupka E."/>
            <person name="Sugiura K."/>
            <person name="Sultana R."/>
            <person name="Takenaka Y."/>
            <person name="Taki K."/>
            <person name="Tammoja K."/>
            <person name="Tan S.L."/>
            <person name="Tang S."/>
            <person name="Taylor M.S."/>
            <person name="Tegner J."/>
            <person name="Teichmann S.A."/>
            <person name="Ueda H.R."/>
            <person name="van Nimwegen E."/>
            <person name="Verardo R."/>
            <person name="Wei C.L."/>
            <person name="Yagi K."/>
            <person name="Yamanishi H."/>
            <person name="Zabarovsky E."/>
            <person name="Zhu S."/>
            <person name="Zimmer A."/>
            <person name="Hide W."/>
            <person name="Bult C."/>
            <person name="Grimmond S.M."/>
            <person name="Teasdale R.D."/>
            <person name="Liu E.T."/>
            <person name="Brusic V."/>
            <person name="Quackenbush J."/>
            <person name="Wahlestedt C."/>
            <person name="Mattick J.S."/>
            <person name="Hume D.A."/>
            <person name="Kai C."/>
            <person name="Sasaki D."/>
            <person name="Tomaru Y."/>
            <person name="Fukuda S."/>
            <person name="Kanamori-Katayama M."/>
            <person name="Suzuki M."/>
            <person name="Aoki J."/>
            <person name="Arakawa T."/>
            <person name="Iida J."/>
            <person name="Imamura K."/>
            <person name="Itoh M."/>
            <person name="Kato T."/>
            <person name="Kawaji H."/>
            <person name="Kawagashira N."/>
            <person name="Kawashima T."/>
            <person name="Kojima M."/>
            <person name="Kondo S."/>
            <person name="Konno H."/>
            <person name="Nakano K."/>
            <person name="Ninomiya N."/>
            <person name="Nishio T."/>
            <person name="Okada M."/>
            <person name="Plessy C."/>
            <person name="Shibata K."/>
            <person name="Shiraki T."/>
            <person name="Suzuki S."/>
            <person name="Tagami M."/>
            <person name="Waki K."/>
            <person name="Watahiki A."/>
            <person name="Okamura-Oho Y."/>
            <person name="Suzuki H."/>
            <person name="Kawai J."/>
            <person name="Hayashizaki Y."/>
        </authorList>
    </citation>
    <scope>NUCLEOTIDE SEQUENCE [LARGE SCALE MRNA] OF 50-590 (ISOFORM 2)</scope>
    <source>
        <strain>C57BL/6J</strain>
    </source>
</reference>
<reference key="3">
    <citation type="journal article" date="2011" name="Cell">
        <title>Mapping the NPHP-JBTS-MKS protein network reveals ciliopathy disease genes and pathways.</title>
        <authorList>
            <person name="Sang L."/>
            <person name="Miller J.J."/>
            <person name="Corbit K.C."/>
            <person name="Giles R.H."/>
            <person name="Brauer M.J."/>
            <person name="Otto E.A."/>
            <person name="Baye L.M."/>
            <person name="Wen X."/>
            <person name="Scales S.J."/>
            <person name="Kwong M."/>
            <person name="Huntzicker E.G."/>
            <person name="Sfakianos M.K."/>
            <person name="Sandoval W."/>
            <person name="Bazan J.F."/>
            <person name="Kulkarni P."/>
            <person name="Garcia-Gonzalo F.R."/>
            <person name="Seol A.D."/>
            <person name="O'Toole J.F."/>
            <person name="Held S."/>
            <person name="Reutter H.M."/>
            <person name="Lane W.S."/>
            <person name="Rafiq M.A."/>
            <person name="Noor A."/>
            <person name="Ansar M."/>
            <person name="Devi A.R."/>
            <person name="Sheffield V.C."/>
            <person name="Slusarski D.C."/>
            <person name="Vincent J.B."/>
            <person name="Doherty D.A."/>
            <person name="Hildebrandt F."/>
            <person name="Reiter J.F."/>
            <person name="Jackson P.K."/>
        </authorList>
    </citation>
    <scope>INTERACTION WITH MKS1</scope>
</reference>
<reference key="4">
    <citation type="journal article" date="2012" name="Nat. Cell Biol.">
        <title>A ciliopathy complex at the transition zone protects the cilia as a privileged membrane domain.</title>
        <authorList>
            <person name="Chih B."/>
            <person name="Liu P."/>
            <person name="Chinn Y."/>
            <person name="Chalouni C."/>
            <person name="Komuves L.G."/>
            <person name="Hass P.E."/>
            <person name="Sandoval W."/>
            <person name="Peterson A.S."/>
        </authorList>
    </citation>
    <scope>IDENTIFICATION IN THE TECTONIC-LIKE COMPLEX</scope>
    <scope>FUNCTION</scope>
</reference>
<reference key="5">
    <citation type="journal article" date="2011" name="Nat. Genet.">
        <title>A transition zone complex regulates mammalian ciliogenesis and ciliary membrane composition.</title>
        <authorList>
            <person name="Garcia-Gonzalo F.R."/>
            <person name="Corbit K.C."/>
            <person name="Sirerol-Piquer M.S."/>
            <person name="Ramaswami G."/>
            <person name="Otto E.A."/>
            <person name="Noriega T.R."/>
            <person name="Seol A.D."/>
            <person name="Robinson J.F."/>
            <person name="Bennett C.L."/>
            <person name="Josifova D.J."/>
            <person name="Garcia-Verdugo J.M."/>
            <person name="Katsanis N."/>
            <person name="Hildebrandt F."/>
            <person name="Reiter J.F."/>
        </authorList>
    </citation>
    <scope>FUNCTION</scope>
    <scope>DISRUPTION PHENOTYPE</scope>
    <scope>SUBCELLULAR LOCATION</scope>
    <scope>IDENTIFICATION IN THE TECTONIC-LIKE COMPLEX</scope>
</reference>